<feature type="chain" id="PRO_1000135543" description="Trp operon repressor">
    <location>
        <begin position="1"/>
        <end position="108"/>
    </location>
</feature>
<feature type="DNA-binding region" evidence="1">
    <location>
        <begin position="68"/>
        <end position="91"/>
    </location>
</feature>
<keyword id="KW-0963">Cytoplasm</keyword>
<keyword id="KW-0238">DNA-binding</keyword>
<keyword id="KW-1185">Reference proteome</keyword>
<keyword id="KW-0678">Repressor</keyword>
<keyword id="KW-0804">Transcription</keyword>
<keyword id="KW-0805">Transcription regulation</keyword>
<proteinExistence type="inferred from homology"/>
<organism>
    <name type="scientific">Escherichia coli (strain 55989 / EAEC)</name>
    <dbReference type="NCBI Taxonomy" id="585055"/>
    <lineage>
        <taxon>Bacteria</taxon>
        <taxon>Pseudomonadati</taxon>
        <taxon>Pseudomonadota</taxon>
        <taxon>Gammaproteobacteria</taxon>
        <taxon>Enterobacterales</taxon>
        <taxon>Enterobacteriaceae</taxon>
        <taxon>Escherichia</taxon>
    </lineage>
</organism>
<comment type="function">
    <text evidence="1">This protein is an aporepressor. When complexed with L-tryptophan it binds the operator region of the trp operon (5'-ACTAGT-'3') and prevents the initiation of transcription. The complex also regulates trp repressor biosynthesis by binding to its regulatory region.</text>
</comment>
<comment type="subunit">
    <text evidence="1">Homodimer.</text>
</comment>
<comment type="subcellular location">
    <subcellularLocation>
        <location evidence="1">Cytoplasm</location>
    </subcellularLocation>
</comment>
<comment type="similarity">
    <text evidence="1">Belongs to the TrpR family.</text>
</comment>
<protein>
    <recommendedName>
        <fullName evidence="1">Trp operon repressor</fullName>
    </recommendedName>
</protein>
<reference key="1">
    <citation type="journal article" date="2009" name="PLoS Genet.">
        <title>Organised genome dynamics in the Escherichia coli species results in highly diverse adaptive paths.</title>
        <authorList>
            <person name="Touchon M."/>
            <person name="Hoede C."/>
            <person name="Tenaillon O."/>
            <person name="Barbe V."/>
            <person name="Baeriswyl S."/>
            <person name="Bidet P."/>
            <person name="Bingen E."/>
            <person name="Bonacorsi S."/>
            <person name="Bouchier C."/>
            <person name="Bouvet O."/>
            <person name="Calteau A."/>
            <person name="Chiapello H."/>
            <person name="Clermont O."/>
            <person name="Cruveiller S."/>
            <person name="Danchin A."/>
            <person name="Diard M."/>
            <person name="Dossat C."/>
            <person name="Karoui M.E."/>
            <person name="Frapy E."/>
            <person name="Garry L."/>
            <person name="Ghigo J.M."/>
            <person name="Gilles A.M."/>
            <person name="Johnson J."/>
            <person name="Le Bouguenec C."/>
            <person name="Lescat M."/>
            <person name="Mangenot S."/>
            <person name="Martinez-Jehanne V."/>
            <person name="Matic I."/>
            <person name="Nassif X."/>
            <person name="Oztas S."/>
            <person name="Petit M.A."/>
            <person name="Pichon C."/>
            <person name="Rouy Z."/>
            <person name="Ruf C.S."/>
            <person name="Schneider D."/>
            <person name="Tourret J."/>
            <person name="Vacherie B."/>
            <person name="Vallenet D."/>
            <person name="Medigue C."/>
            <person name="Rocha E.P.C."/>
            <person name="Denamur E."/>
        </authorList>
    </citation>
    <scope>NUCLEOTIDE SEQUENCE [LARGE SCALE GENOMIC DNA]</scope>
    <source>
        <strain>55989 / EAEC</strain>
    </source>
</reference>
<accession>B7LEN9</accession>
<gene>
    <name evidence="1" type="primary">trpR</name>
    <name type="ordered locus">EC55989_5055</name>
</gene>
<evidence type="ECO:0000255" key="1">
    <source>
        <dbReference type="HAMAP-Rule" id="MF_00475"/>
    </source>
</evidence>
<dbReference type="EMBL" id="CU928145">
    <property type="protein sequence ID" value="CAV02202.1"/>
    <property type="molecule type" value="Genomic_DNA"/>
</dbReference>
<dbReference type="RefSeq" id="WP_000068679.1">
    <property type="nucleotide sequence ID" value="NC_011748.1"/>
</dbReference>
<dbReference type="SMR" id="B7LEN9"/>
<dbReference type="GeneID" id="93777452"/>
<dbReference type="KEGG" id="eck:EC55989_5055"/>
<dbReference type="HOGENOM" id="CLU_147939_0_0_6"/>
<dbReference type="Proteomes" id="UP000000746">
    <property type="component" value="Chromosome"/>
</dbReference>
<dbReference type="GO" id="GO:0005737">
    <property type="term" value="C:cytoplasm"/>
    <property type="evidence" value="ECO:0007669"/>
    <property type="project" value="UniProtKB-SubCell"/>
</dbReference>
<dbReference type="GO" id="GO:0003700">
    <property type="term" value="F:DNA-binding transcription factor activity"/>
    <property type="evidence" value="ECO:0007669"/>
    <property type="project" value="InterPro"/>
</dbReference>
<dbReference type="GO" id="GO:0043565">
    <property type="term" value="F:sequence-specific DNA binding"/>
    <property type="evidence" value="ECO:0007669"/>
    <property type="project" value="InterPro"/>
</dbReference>
<dbReference type="GO" id="GO:0045892">
    <property type="term" value="P:negative regulation of DNA-templated transcription"/>
    <property type="evidence" value="ECO:0007669"/>
    <property type="project" value="UniProtKB-UniRule"/>
</dbReference>
<dbReference type="FunFam" id="1.10.1270.10:FF:000001">
    <property type="entry name" value="Trp operon repressor"/>
    <property type="match status" value="1"/>
</dbReference>
<dbReference type="Gene3D" id="1.10.1270.10">
    <property type="entry name" value="TrpR-like"/>
    <property type="match status" value="1"/>
</dbReference>
<dbReference type="HAMAP" id="MF_00475">
    <property type="entry name" value="Trp_repressor"/>
    <property type="match status" value="1"/>
</dbReference>
<dbReference type="InterPro" id="IPR000831">
    <property type="entry name" value="Trp_repress"/>
</dbReference>
<dbReference type="InterPro" id="IPR013335">
    <property type="entry name" value="Trp_repress_bac"/>
</dbReference>
<dbReference type="InterPro" id="IPR010921">
    <property type="entry name" value="Trp_repressor/repl_initiator"/>
</dbReference>
<dbReference type="InterPro" id="IPR038116">
    <property type="entry name" value="TrpR-like_sf"/>
</dbReference>
<dbReference type="NCBIfam" id="TIGR01321">
    <property type="entry name" value="TrpR"/>
    <property type="match status" value="1"/>
</dbReference>
<dbReference type="PANTHER" id="PTHR38025">
    <property type="entry name" value="TRP OPERON REPRESSOR"/>
    <property type="match status" value="1"/>
</dbReference>
<dbReference type="PANTHER" id="PTHR38025:SF1">
    <property type="entry name" value="TRP OPERON REPRESSOR"/>
    <property type="match status" value="1"/>
</dbReference>
<dbReference type="Pfam" id="PF01371">
    <property type="entry name" value="Trp_repressor"/>
    <property type="match status" value="1"/>
</dbReference>
<dbReference type="PIRSF" id="PIRSF003196">
    <property type="entry name" value="Trp_repressor"/>
    <property type="match status" value="1"/>
</dbReference>
<dbReference type="SUPFAM" id="SSF48295">
    <property type="entry name" value="TrpR-like"/>
    <property type="match status" value="1"/>
</dbReference>
<name>TRPR_ECO55</name>
<sequence length="108" mass="12355">MAQQSPYSAAMAEQRHQEWLRFVDLLKNAYQNDLHLPLLNLMLTPDEREALGTRVRIVEELLRGEMSQRELKNELGAGIATITRGSNSLKAAPVELRQWLEEVLLKSD</sequence>